<feature type="chain" id="PRO_0000430323" description="KEOPS complex subunit Cgi121">
    <location>
        <begin position="1"/>
        <end position="171"/>
    </location>
</feature>
<sequence>MTPKFKNFKHDNSGQVETYLFEVISKYTMLEIKTKFGKLCIAKVKLASESIERALNLCNDNCQIVSAKCHEEVIFATILAIKAFSSGRNTAKTIKGEILLRLAGVKQIKDAIKIIGARKGENLIIYFGVSDPCSSLKDFISSLGLREEPLKPCDEDEVKRGFERAAIIEAL</sequence>
<protein>
    <recommendedName>
        <fullName>KEOPS complex subunit Cgi121</fullName>
    </recommendedName>
</protein>
<evidence type="ECO:0000250" key="1"/>
<evidence type="ECO:0000269" key="2">
    <source>
    </source>
</evidence>
<evidence type="ECO:0000269" key="3">
    <source>
    </source>
</evidence>
<evidence type="ECO:0000305" key="4"/>
<proteinExistence type="evidence at protein level"/>
<comment type="function">
    <text evidence="2 3">Component of the KEOPS complex that is required for the formation of a threonylcarbamoyl group on adenosine at position 37 (t(6)A37) in tRNAs that read codons beginning with adenine. The complex is probably involved in the transfer of the threonylcarbamoyl moiety of threonylcarbamoyl-AMP (TC-AMP) to the N6 group of A37. Cgi121 acts as an allosteric effector that regulates the t(6)A activity of the complex. Cgi121 is not required for tRNA modification.</text>
</comment>
<comment type="subunit">
    <text evidence="2 3">Component of the KEOPS complex that consists of Kae1, Bud32, Cgi121 and Pcc1; the whole complex dimerizes.</text>
</comment>
<comment type="subcellular location">
    <subcellularLocation>
        <location evidence="1">Cytoplasm</location>
    </subcellularLocation>
</comment>
<comment type="similarity">
    <text evidence="4">Belongs to the CGI121/TPRKB family.</text>
</comment>
<gene>
    <name type="primary">cgi121</name>
    <name type="ordered locus">PAB1522</name>
    <name type="ordered locus">PYRAB12920</name>
</gene>
<accession>Q9UZ62</accession>
<dbReference type="EMBL" id="AJ248287">
    <property type="protein sequence ID" value="CAB50197.1"/>
    <property type="molecule type" value="Genomic_DNA"/>
</dbReference>
<dbReference type="EMBL" id="HE613800">
    <property type="protein sequence ID" value="CCE70731.1"/>
    <property type="molecule type" value="Genomic_DNA"/>
</dbReference>
<dbReference type="PIR" id="H75037">
    <property type="entry name" value="H75037"/>
</dbReference>
<dbReference type="SMR" id="Q9UZ62"/>
<dbReference type="STRING" id="272844.PAB1522"/>
<dbReference type="KEGG" id="pab:PAB1522"/>
<dbReference type="PATRIC" id="fig|272844.11.peg.1374"/>
<dbReference type="eggNOG" id="arCOG02197">
    <property type="taxonomic scope" value="Archaea"/>
</dbReference>
<dbReference type="HOGENOM" id="CLU_1830686_0_0_2"/>
<dbReference type="PhylomeDB" id="Q9UZ62"/>
<dbReference type="Proteomes" id="UP000000810">
    <property type="component" value="Chromosome"/>
</dbReference>
<dbReference type="Proteomes" id="UP000009139">
    <property type="component" value="Chromosome"/>
</dbReference>
<dbReference type="GO" id="GO:0005737">
    <property type="term" value="C:cytoplasm"/>
    <property type="evidence" value="ECO:0007669"/>
    <property type="project" value="UniProtKB-SubCell"/>
</dbReference>
<dbReference type="GO" id="GO:0000408">
    <property type="term" value="C:EKC/KEOPS complex"/>
    <property type="evidence" value="ECO:0000314"/>
    <property type="project" value="UniProtKB"/>
</dbReference>
<dbReference type="GO" id="GO:0050790">
    <property type="term" value="P:regulation of catalytic activity"/>
    <property type="evidence" value="ECO:0000314"/>
    <property type="project" value="UniProtKB"/>
</dbReference>
<dbReference type="GO" id="GO:0002949">
    <property type="term" value="P:tRNA threonylcarbamoyladenosine modification"/>
    <property type="evidence" value="ECO:0000314"/>
    <property type="project" value="UniProtKB"/>
</dbReference>
<dbReference type="Gene3D" id="3.30.2380.10">
    <property type="entry name" value="CGI121/TPRKB"/>
    <property type="match status" value="1"/>
</dbReference>
<dbReference type="InterPro" id="IPR013926">
    <property type="entry name" value="CGI121/TPRKB"/>
</dbReference>
<dbReference type="InterPro" id="IPR036504">
    <property type="entry name" value="CGI121/TPRKB_sf"/>
</dbReference>
<dbReference type="NCBIfam" id="NF011465">
    <property type="entry name" value="PRK14886.1-1"/>
    <property type="match status" value="1"/>
</dbReference>
<dbReference type="Pfam" id="PF08617">
    <property type="entry name" value="CGI-121"/>
    <property type="match status" value="1"/>
</dbReference>
<dbReference type="SUPFAM" id="SSF143870">
    <property type="entry name" value="PF0523-like"/>
    <property type="match status" value="1"/>
</dbReference>
<reference key="1">
    <citation type="journal article" date="2003" name="Mol. Microbiol.">
        <title>An integrated analysis of the genome of the hyperthermophilic archaeon Pyrococcus abyssi.</title>
        <authorList>
            <person name="Cohen G.N."/>
            <person name="Barbe V."/>
            <person name="Flament D."/>
            <person name="Galperin M."/>
            <person name="Heilig R."/>
            <person name="Lecompte O."/>
            <person name="Poch O."/>
            <person name="Prieur D."/>
            <person name="Querellou J."/>
            <person name="Ripp R."/>
            <person name="Thierry J.-C."/>
            <person name="Van der Oost J."/>
            <person name="Weissenbach J."/>
            <person name="Zivanovic Y."/>
            <person name="Forterre P."/>
        </authorList>
    </citation>
    <scope>NUCLEOTIDE SEQUENCE [LARGE SCALE GENOMIC DNA]</scope>
    <source>
        <strain>GE5 / Orsay</strain>
    </source>
</reference>
<reference key="2">
    <citation type="journal article" date="2012" name="Curr. Microbiol.">
        <title>Re-annotation of two hyperthermophilic archaea Pyrococcus abyssi GE5 and Pyrococcus furiosus DSM 3638.</title>
        <authorList>
            <person name="Gao J."/>
            <person name="Wang J."/>
        </authorList>
    </citation>
    <scope>GENOME REANNOTATION</scope>
    <source>
        <strain>GE5 / Orsay</strain>
    </source>
</reference>
<reference key="3">
    <citation type="journal article" date="2013" name="Nucleic Acids Res.">
        <title>In vitro biosynthesis of a universal t6A tRNA modification in Archaea and Eukarya.</title>
        <authorList>
            <person name="Perrochia L."/>
            <person name="Crozat E."/>
            <person name="Hecker A."/>
            <person name="Zhang W."/>
            <person name="Bareille J."/>
            <person name="Collinet B."/>
            <person name="van Tilbeurgh H."/>
            <person name="Forterre P."/>
            <person name="Basta T."/>
        </authorList>
    </citation>
    <scope>FUNCTION IN T(6)A TRNA MODIFICATION</scope>
    <scope>SUBUNIT</scope>
</reference>
<reference key="4">
    <citation type="journal article" date="2013" name="Nucleic Acids Res.">
        <title>Functional assignment of KEOPS/EKC complex subunits in the biosynthesis of the universal t6A tRNA modification.</title>
        <authorList>
            <person name="Perrochia L."/>
            <person name="Guetta D."/>
            <person name="Hecker A."/>
            <person name="Forterre P."/>
            <person name="Basta T."/>
        </authorList>
    </citation>
    <scope>FUNCTION IN THE KEOPS COMPLEX</scope>
    <scope>SUBUNIT</scope>
</reference>
<organism>
    <name type="scientific">Pyrococcus abyssi (strain GE5 / Orsay)</name>
    <dbReference type="NCBI Taxonomy" id="272844"/>
    <lineage>
        <taxon>Archaea</taxon>
        <taxon>Methanobacteriati</taxon>
        <taxon>Methanobacteriota</taxon>
        <taxon>Thermococci</taxon>
        <taxon>Thermococcales</taxon>
        <taxon>Thermococcaceae</taxon>
        <taxon>Pyrococcus</taxon>
    </lineage>
</organism>
<name>CG121_PYRAB</name>
<keyword id="KW-0963">Cytoplasm</keyword>
<keyword id="KW-0819">tRNA processing</keyword>